<comment type="function">
    <text evidence="2">Catalyzes the formation of N(7)-methylguanine at position 46 (m7G46) in tRNA.</text>
</comment>
<comment type="catalytic activity">
    <reaction evidence="2">
        <text>guanosine(46) in tRNA + S-adenosyl-L-methionine = N(7)-methylguanosine(46) in tRNA + S-adenosyl-L-homocysteine</text>
        <dbReference type="Rhea" id="RHEA:42708"/>
        <dbReference type="Rhea" id="RHEA-COMP:10188"/>
        <dbReference type="Rhea" id="RHEA-COMP:10189"/>
        <dbReference type="ChEBI" id="CHEBI:57856"/>
        <dbReference type="ChEBI" id="CHEBI:59789"/>
        <dbReference type="ChEBI" id="CHEBI:74269"/>
        <dbReference type="ChEBI" id="CHEBI:74480"/>
        <dbReference type="EC" id="2.1.1.33"/>
    </reaction>
</comment>
<comment type="pathway">
    <text evidence="2">tRNA modification; N(7)-methylguanine-tRNA biosynthesis.</text>
</comment>
<comment type="similarity">
    <text evidence="2">Belongs to the class I-like SAM-binding methyltransferase superfamily. TrmB family.</text>
</comment>
<protein>
    <recommendedName>
        <fullName evidence="2">tRNA (guanine-N(7)-)-methyltransferase</fullName>
        <ecNumber evidence="2">2.1.1.33</ecNumber>
    </recommendedName>
    <alternativeName>
        <fullName evidence="2">tRNA (guanine(46)-N(7))-methyltransferase</fullName>
    </alternativeName>
    <alternativeName>
        <fullName evidence="2">tRNA(m7G46)-methyltransferase</fullName>
    </alternativeName>
</protein>
<gene>
    <name evidence="2" type="primary">trmB</name>
    <name type="ordered locus">Shal_1155</name>
</gene>
<reference key="1">
    <citation type="submission" date="2008-01" db="EMBL/GenBank/DDBJ databases">
        <title>Complete sequence of Shewanella halifaxensis HAW-EB4.</title>
        <authorList>
            <consortium name="US DOE Joint Genome Institute"/>
            <person name="Copeland A."/>
            <person name="Lucas S."/>
            <person name="Lapidus A."/>
            <person name="Glavina del Rio T."/>
            <person name="Dalin E."/>
            <person name="Tice H."/>
            <person name="Bruce D."/>
            <person name="Goodwin L."/>
            <person name="Pitluck S."/>
            <person name="Sims D."/>
            <person name="Brettin T."/>
            <person name="Detter J.C."/>
            <person name="Han C."/>
            <person name="Kuske C.R."/>
            <person name="Schmutz J."/>
            <person name="Larimer F."/>
            <person name="Land M."/>
            <person name="Hauser L."/>
            <person name="Kyrpides N."/>
            <person name="Kim E."/>
            <person name="Zhao J.-S."/>
            <person name="Richardson P."/>
        </authorList>
    </citation>
    <scope>NUCLEOTIDE SEQUENCE [LARGE SCALE GENOMIC DNA]</scope>
    <source>
        <strain>HAW-EB4</strain>
    </source>
</reference>
<organism>
    <name type="scientific">Shewanella halifaxensis (strain HAW-EB4)</name>
    <dbReference type="NCBI Taxonomy" id="458817"/>
    <lineage>
        <taxon>Bacteria</taxon>
        <taxon>Pseudomonadati</taxon>
        <taxon>Pseudomonadota</taxon>
        <taxon>Gammaproteobacteria</taxon>
        <taxon>Alteromonadales</taxon>
        <taxon>Shewanellaceae</taxon>
        <taxon>Shewanella</taxon>
    </lineage>
</organism>
<sequence>MSDVTTAEFNEEGKYLRKVRSFVLREGRLTKGQAQAMEQQWPIMGLDYTPESIDLVEVFGREADTVLEIGFGMGASLVAMAKASPELNFIGIEVHKPGVGACLAEAAEAGVTNLRVYHHDAIEVLENSIAEGSLACVQLFFPDPWHKTRHHKRRIVQAPFAELIRSKLKVGGVFHLATDWENYSEHMLEVMNAAPGYKNQSATGDVVERPDHRPLTKFEARGHRLGHGVWDLMFERV</sequence>
<accession>B0TJD3</accession>
<dbReference type="EC" id="2.1.1.33" evidence="2"/>
<dbReference type="EMBL" id="CP000931">
    <property type="protein sequence ID" value="ABZ75724.1"/>
    <property type="molecule type" value="Genomic_DNA"/>
</dbReference>
<dbReference type="RefSeq" id="WP_012276267.1">
    <property type="nucleotide sequence ID" value="NC_010334.1"/>
</dbReference>
<dbReference type="SMR" id="B0TJD3"/>
<dbReference type="STRING" id="458817.Shal_1155"/>
<dbReference type="KEGG" id="shl:Shal_1155"/>
<dbReference type="eggNOG" id="COG0220">
    <property type="taxonomic scope" value="Bacteria"/>
</dbReference>
<dbReference type="HOGENOM" id="CLU_050910_0_1_6"/>
<dbReference type="OrthoDB" id="9802090at2"/>
<dbReference type="UniPathway" id="UPA00989"/>
<dbReference type="Proteomes" id="UP000001317">
    <property type="component" value="Chromosome"/>
</dbReference>
<dbReference type="GO" id="GO:0043527">
    <property type="term" value="C:tRNA methyltransferase complex"/>
    <property type="evidence" value="ECO:0007669"/>
    <property type="project" value="TreeGrafter"/>
</dbReference>
<dbReference type="GO" id="GO:0008176">
    <property type="term" value="F:tRNA (guanine(46)-N7)-methyltransferase activity"/>
    <property type="evidence" value="ECO:0007669"/>
    <property type="project" value="UniProtKB-UniRule"/>
</dbReference>
<dbReference type="CDD" id="cd02440">
    <property type="entry name" value="AdoMet_MTases"/>
    <property type="match status" value="1"/>
</dbReference>
<dbReference type="FunFam" id="3.40.50.150:FF:000024">
    <property type="entry name" value="tRNA (guanine-N(7)-)-methyltransferase"/>
    <property type="match status" value="1"/>
</dbReference>
<dbReference type="Gene3D" id="3.40.50.150">
    <property type="entry name" value="Vaccinia Virus protein VP39"/>
    <property type="match status" value="1"/>
</dbReference>
<dbReference type="HAMAP" id="MF_01057">
    <property type="entry name" value="tRNA_methyltr_TrmB"/>
    <property type="match status" value="1"/>
</dbReference>
<dbReference type="InterPro" id="IPR029063">
    <property type="entry name" value="SAM-dependent_MTases_sf"/>
</dbReference>
<dbReference type="InterPro" id="IPR003358">
    <property type="entry name" value="tRNA_(Gua-N-7)_MeTrfase_Trmb"/>
</dbReference>
<dbReference type="InterPro" id="IPR055361">
    <property type="entry name" value="tRNA_methyltr_TrmB_bact"/>
</dbReference>
<dbReference type="NCBIfam" id="TIGR00091">
    <property type="entry name" value="tRNA (guanosine(46)-N7)-methyltransferase TrmB"/>
    <property type="match status" value="1"/>
</dbReference>
<dbReference type="PANTHER" id="PTHR23417">
    <property type="entry name" value="3-DEOXY-D-MANNO-OCTULOSONIC-ACID TRANSFERASE/TRNA GUANINE-N 7 - -METHYLTRANSFERASE"/>
    <property type="match status" value="1"/>
</dbReference>
<dbReference type="PANTHER" id="PTHR23417:SF14">
    <property type="entry name" value="PENTACOTRIPEPTIDE-REPEAT REGION OF PRORP DOMAIN-CONTAINING PROTEIN"/>
    <property type="match status" value="1"/>
</dbReference>
<dbReference type="Pfam" id="PF02390">
    <property type="entry name" value="Methyltransf_4"/>
    <property type="match status" value="1"/>
</dbReference>
<dbReference type="SUPFAM" id="SSF53335">
    <property type="entry name" value="S-adenosyl-L-methionine-dependent methyltransferases"/>
    <property type="match status" value="1"/>
</dbReference>
<dbReference type="PROSITE" id="PS51625">
    <property type="entry name" value="SAM_MT_TRMB"/>
    <property type="match status" value="1"/>
</dbReference>
<keyword id="KW-0489">Methyltransferase</keyword>
<keyword id="KW-0949">S-adenosyl-L-methionine</keyword>
<keyword id="KW-0808">Transferase</keyword>
<keyword id="KW-0819">tRNA processing</keyword>
<feature type="chain" id="PRO_1000084450" description="tRNA (guanine-N(7)-)-methyltransferase">
    <location>
        <begin position="1"/>
        <end position="237"/>
    </location>
</feature>
<feature type="active site" evidence="1">
    <location>
        <position position="143"/>
    </location>
</feature>
<feature type="binding site" evidence="2">
    <location>
        <position position="68"/>
    </location>
    <ligand>
        <name>S-adenosyl-L-methionine</name>
        <dbReference type="ChEBI" id="CHEBI:59789"/>
    </ligand>
</feature>
<feature type="binding site" evidence="2">
    <location>
        <position position="93"/>
    </location>
    <ligand>
        <name>S-adenosyl-L-methionine</name>
        <dbReference type="ChEBI" id="CHEBI:59789"/>
    </ligand>
</feature>
<feature type="binding site" evidence="2">
    <location>
        <position position="120"/>
    </location>
    <ligand>
        <name>S-adenosyl-L-methionine</name>
        <dbReference type="ChEBI" id="CHEBI:59789"/>
    </ligand>
</feature>
<feature type="binding site" evidence="2">
    <location>
        <position position="143"/>
    </location>
    <ligand>
        <name>S-adenosyl-L-methionine</name>
        <dbReference type="ChEBI" id="CHEBI:59789"/>
    </ligand>
</feature>
<feature type="binding site" evidence="2">
    <location>
        <position position="147"/>
    </location>
    <ligand>
        <name>substrate</name>
    </ligand>
</feature>
<feature type="binding site" evidence="2">
    <location>
        <position position="179"/>
    </location>
    <ligand>
        <name>substrate</name>
    </ligand>
</feature>
<feature type="binding site" evidence="2">
    <location>
        <begin position="216"/>
        <end position="219"/>
    </location>
    <ligand>
        <name>substrate</name>
    </ligand>
</feature>
<evidence type="ECO:0000250" key="1"/>
<evidence type="ECO:0000255" key="2">
    <source>
        <dbReference type="HAMAP-Rule" id="MF_01057"/>
    </source>
</evidence>
<proteinExistence type="inferred from homology"/>
<name>TRMB_SHEHH</name>